<sequence length="206" mass="23368">MITVALPKGRIAEETLDRFEKIFGERFVFEDRKLILERGEFKFLLVRNQDVPTYVLHQAADIGIVGLDVLEEQESDLIRLLDLGIGRCKVVIGSPMGSEIDYSKPQIKIATKMTNIAKKHFAKQALAVDLIKLYGSIELAPLVGLADAIVDIVETGTTMKQNHLKIDEVIMESSAYMVANRNSFYEKKDKILELQRQFSKLKEVRE</sequence>
<accession>Q7M9N0</accession>
<keyword id="KW-0028">Amino-acid biosynthesis</keyword>
<keyword id="KW-0067">ATP-binding</keyword>
<keyword id="KW-0963">Cytoplasm</keyword>
<keyword id="KW-0328">Glycosyltransferase</keyword>
<keyword id="KW-0368">Histidine biosynthesis</keyword>
<keyword id="KW-0547">Nucleotide-binding</keyword>
<keyword id="KW-1185">Reference proteome</keyword>
<keyword id="KW-0808">Transferase</keyword>
<reference key="1">
    <citation type="journal article" date="2003" name="Proc. Natl. Acad. Sci. U.S.A.">
        <title>Complete genome sequence and analysis of Wolinella succinogenes.</title>
        <authorList>
            <person name="Baar C."/>
            <person name="Eppinger M."/>
            <person name="Raddatz G."/>
            <person name="Simon J."/>
            <person name="Lanz C."/>
            <person name="Klimmek O."/>
            <person name="Nandakumar R."/>
            <person name="Gross R."/>
            <person name="Rosinus A."/>
            <person name="Keller H."/>
            <person name="Jagtap P."/>
            <person name="Linke B."/>
            <person name="Meyer F."/>
            <person name="Lederer H."/>
            <person name="Schuster S.C."/>
        </authorList>
    </citation>
    <scope>NUCLEOTIDE SEQUENCE [LARGE SCALE GENOMIC DNA]</scope>
    <source>
        <strain>ATCC 29543 / DSM 1740 / CCUG 13145 / JCM 31913 / LMG 7466 / NCTC 11488 / FDC 602W</strain>
    </source>
</reference>
<proteinExistence type="inferred from homology"/>
<gene>
    <name evidence="1" type="primary">hisG</name>
    <name type="ordered locus">WS0804</name>
</gene>
<organism>
    <name type="scientific">Wolinella succinogenes (strain ATCC 29543 / DSM 1740 / CCUG 13145 / JCM 31913 / LMG 7466 / NCTC 11488 / FDC 602W)</name>
    <name type="common">Vibrio succinogenes</name>
    <dbReference type="NCBI Taxonomy" id="273121"/>
    <lineage>
        <taxon>Bacteria</taxon>
        <taxon>Pseudomonadati</taxon>
        <taxon>Campylobacterota</taxon>
        <taxon>Epsilonproteobacteria</taxon>
        <taxon>Campylobacterales</taxon>
        <taxon>Helicobacteraceae</taxon>
        <taxon>Wolinella</taxon>
    </lineage>
</organism>
<evidence type="ECO:0000255" key="1">
    <source>
        <dbReference type="HAMAP-Rule" id="MF_01018"/>
    </source>
</evidence>
<comment type="function">
    <text evidence="1">Catalyzes the condensation of ATP and 5-phosphoribose 1-diphosphate to form N'-(5'-phosphoribosyl)-ATP (PR-ATP). Has a crucial role in the pathway because the rate of histidine biosynthesis seems to be controlled primarily by regulation of HisG enzymatic activity.</text>
</comment>
<comment type="catalytic activity">
    <reaction evidence="1">
        <text>1-(5-phospho-beta-D-ribosyl)-ATP + diphosphate = 5-phospho-alpha-D-ribose 1-diphosphate + ATP</text>
        <dbReference type="Rhea" id="RHEA:18473"/>
        <dbReference type="ChEBI" id="CHEBI:30616"/>
        <dbReference type="ChEBI" id="CHEBI:33019"/>
        <dbReference type="ChEBI" id="CHEBI:58017"/>
        <dbReference type="ChEBI" id="CHEBI:73183"/>
        <dbReference type="EC" id="2.4.2.17"/>
    </reaction>
</comment>
<comment type="pathway">
    <text evidence="1">Amino-acid biosynthesis; L-histidine biosynthesis; L-histidine from 5-phospho-alpha-D-ribose 1-diphosphate: step 1/9.</text>
</comment>
<comment type="subunit">
    <text evidence="1">Heteromultimer composed of HisG and HisZ subunits.</text>
</comment>
<comment type="subcellular location">
    <subcellularLocation>
        <location evidence="1">Cytoplasm</location>
    </subcellularLocation>
</comment>
<comment type="domain">
    <text>Lacks the C-terminal regulatory region which is replaced by HisZ.</text>
</comment>
<comment type="similarity">
    <text evidence="1">Belongs to the ATP phosphoribosyltransferase family. Short subfamily.</text>
</comment>
<name>HIS1_WOLSU</name>
<protein>
    <recommendedName>
        <fullName evidence="1">ATP phosphoribosyltransferase</fullName>
        <shortName evidence="1">ATP-PRT</shortName>
        <shortName evidence="1">ATP-PRTase</shortName>
        <ecNumber evidence="1">2.4.2.17</ecNumber>
    </recommendedName>
</protein>
<feature type="chain" id="PRO_0000151947" description="ATP phosphoribosyltransferase">
    <location>
        <begin position="1"/>
        <end position="206"/>
    </location>
</feature>
<dbReference type="EC" id="2.4.2.17" evidence="1"/>
<dbReference type="EMBL" id="BX571659">
    <property type="protein sequence ID" value="CAE09917.1"/>
    <property type="molecule type" value="Genomic_DNA"/>
</dbReference>
<dbReference type="RefSeq" id="WP_011138714.1">
    <property type="nucleotide sequence ID" value="NC_005090.1"/>
</dbReference>
<dbReference type="SMR" id="Q7M9N0"/>
<dbReference type="STRING" id="273121.WS0804"/>
<dbReference type="KEGG" id="wsu:WS0804"/>
<dbReference type="eggNOG" id="COG0040">
    <property type="taxonomic scope" value="Bacteria"/>
</dbReference>
<dbReference type="HOGENOM" id="CLU_038115_2_0_7"/>
<dbReference type="UniPathway" id="UPA00031">
    <property type="reaction ID" value="UER00006"/>
</dbReference>
<dbReference type="Proteomes" id="UP000000422">
    <property type="component" value="Chromosome"/>
</dbReference>
<dbReference type="GO" id="GO:0005737">
    <property type="term" value="C:cytoplasm"/>
    <property type="evidence" value="ECO:0007669"/>
    <property type="project" value="UniProtKB-SubCell"/>
</dbReference>
<dbReference type="GO" id="GO:0005524">
    <property type="term" value="F:ATP binding"/>
    <property type="evidence" value="ECO:0007669"/>
    <property type="project" value="UniProtKB-KW"/>
</dbReference>
<dbReference type="GO" id="GO:0003879">
    <property type="term" value="F:ATP phosphoribosyltransferase activity"/>
    <property type="evidence" value="ECO:0007669"/>
    <property type="project" value="UniProtKB-UniRule"/>
</dbReference>
<dbReference type="GO" id="GO:0000105">
    <property type="term" value="P:L-histidine biosynthetic process"/>
    <property type="evidence" value="ECO:0007669"/>
    <property type="project" value="UniProtKB-UniRule"/>
</dbReference>
<dbReference type="CDD" id="cd13595">
    <property type="entry name" value="PBP2_HisGs"/>
    <property type="match status" value="1"/>
</dbReference>
<dbReference type="FunFam" id="3.40.190.10:FF:000008">
    <property type="entry name" value="ATP phosphoribosyltransferase"/>
    <property type="match status" value="1"/>
</dbReference>
<dbReference type="Gene3D" id="3.40.190.10">
    <property type="entry name" value="Periplasmic binding protein-like II"/>
    <property type="match status" value="2"/>
</dbReference>
<dbReference type="HAMAP" id="MF_01018">
    <property type="entry name" value="HisG_Short"/>
    <property type="match status" value="1"/>
</dbReference>
<dbReference type="InterPro" id="IPR013820">
    <property type="entry name" value="ATP_PRibTrfase_cat"/>
</dbReference>
<dbReference type="InterPro" id="IPR018198">
    <property type="entry name" value="ATP_PRibTrfase_CS"/>
</dbReference>
<dbReference type="InterPro" id="IPR001348">
    <property type="entry name" value="ATP_PRibTrfase_HisG"/>
</dbReference>
<dbReference type="InterPro" id="IPR024893">
    <property type="entry name" value="ATP_PRibTrfase_HisG_short"/>
</dbReference>
<dbReference type="NCBIfam" id="TIGR00070">
    <property type="entry name" value="hisG"/>
    <property type="match status" value="1"/>
</dbReference>
<dbReference type="PANTHER" id="PTHR21403:SF8">
    <property type="entry name" value="ATP PHOSPHORIBOSYLTRANSFERASE"/>
    <property type="match status" value="1"/>
</dbReference>
<dbReference type="PANTHER" id="PTHR21403">
    <property type="entry name" value="ATP PHOSPHORIBOSYLTRANSFERASE ATP-PRTASE"/>
    <property type="match status" value="1"/>
</dbReference>
<dbReference type="Pfam" id="PF01634">
    <property type="entry name" value="HisG"/>
    <property type="match status" value="1"/>
</dbReference>
<dbReference type="SUPFAM" id="SSF53850">
    <property type="entry name" value="Periplasmic binding protein-like II"/>
    <property type="match status" value="1"/>
</dbReference>
<dbReference type="PROSITE" id="PS01316">
    <property type="entry name" value="ATP_P_PHORIBOSYLTR"/>
    <property type="match status" value="1"/>
</dbReference>